<organism>
    <name type="scientific">Campylobacter jejuni subsp. jejuni serotype O:2 (strain ATCC 700819 / NCTC 11168)</name>
    <dbReference type="NCBI Taxonomy" id="192222"/>
    <lineage>
        <taxon>Bacteria</taxon>
        <taxon>Pseudomonadati</taxon>
        <taxon>Campylobacterota</taxon>
        <taxon>Epsilonproteobacteria</taxon>
        <taxon>Campylobacterales</taxon>
        <taxon>Campylobacteraceae</taxon>
        <taxon>Campylobacter</taxon>
    </lineage>
</organism>
<feature type="chain" id="PRO_0000130637" description="Large ribosomal subunit protein uL24">
    <location>
        <begin position="1"/>
        <end position="77"/>
    </location>
</feature>
<dbReference type="EMBL" id="AL111168">
    <property type="protein sequence ID" value="CAL35790.1"/>
    <property type="molecule type" value="Genomic_DNA"/>
</dbReference>
<dbReference type="PIR" id="D81267">
    <property type="entry name" value="D81267"/>
</dbReference>
<dbReference type="RefSeq" id="WP_002779437.1">
    <property type="nucleotide sequence ID" value="NZ_SZUC01000002.1"/>
</dbReference>
<dbReference type="RefSeq" id="YP_002345062.1">
    <property type="nucleotide sequence ID" value="NC_002163.1"/>
</dbReference>
<dbReference type="SMR" id="Q9PLY2"/>
<dbReference type="IntAct" id="Q9PLY2">
    <property type="interactions" value="2"/>
</dbReference>
<dbReference type="STRING" id="192222.Cj1696c"/>
<dbReference type="PaxDb" id="192222-Cj1696c"/>
<dbReference type="EnsemblBacteria" id="CAL35790">
    <property type="protein sequence ID" value="CAL35790"/>
    <property type="gene ID" value="Cj1696c"/>
</dbReference>
<dbReference type="GeneID" id="66544932"/>
<dbReference type="GeneID" id="905970"/>
<dbReference type="KEGG" id="cje:Cj1696c"/>
<dbReference type="PATRIC" id="fig|192222.6.peg.1670"/>
<dbReference type="eggNOG" id="COG0198">
    <property type="taxonomic scope" value="Bacteria"/>
</dbReference>
<dbReference type="HOGENOM" id="CLU_093315_3_0_7"/>
<dbReference type="OrthoDB" id="9807419at2"/>
<dbReference type="Proteomes" id="UP000000799">
    <property type="component" value="Chromosome"/>
</dbReference>
<dbReference type="GO" id="GO:1990904">
    <property type="term" value="C:ribonucleoprotein complex"/>
    <property type="evidence" value="ECO:0007669"/>
    <property type="project" value="UniProtKB-KW"/>
</dbReference>
<dbReference type="GO" id="GO:0005840">
    <property type="term" value="C:ribosome"/>
    <property type="evidence" value="ECO:0007669"/>
    <property type="project" value="UniProtKB-KW"/>
</dbReference>
<dbReference type="GO" id="GO:0019843">
    <property type="term" value="F:rRNA binding"/>
    <property type="evidence" value="ECO:0007669"/>
    <property type="project" value="UniProtKB-UniRule"/>
</dbReference>
<dbReference type="GO" id="GO:0003735">
    <property type="term" value="F:structural constituent of ribosome"/>
    <property type="evidence" value="ECO:0007669"/>
    <property type="project" value="InterPro"/>
</dbReference>
<dbReference type="GO" id="GO:0006412">
    <property type="term" value="P:translation"/>
    <property type="evidence" value="ECO:0007669"/>
    <property type="project" value="UniProtKB-UniRule"/>
</dbReference>
<dbReference type="CDD" id="cd06089">
    <property type="entry name" value="KOW_RPL26"/>
    <property type="match status" value="1"/>
</dbReference>
<dbReference type="FunFam" id="2.30.30.30:FF:000023">
    <property type="entry name" value="50S ribosomal protein L24"/>
    <property type="match status" value="1"/>
</dbReference>
<dbReference type="Gene3D" id="2.30.30.30">
    <property type="match status" value="1"/>
</dbReference>
<dbReference type="HAMAP" id="MF_01326_B">
    <property type="entry name" value="Ribosomal_uL24_B"/>
    <property type="match status" value="1"/>
</dbReference>
<dbReference type="InterPro" id="IPR005824">
    <property type="entry name" value="KOW"/>
</dbReference>
<dbReference type="InterPro" id="IPR014722">
    <property type="entry name" value="Rib_uL2_dom2"/>
</dbReference>
<dbReference type="InterPro" id="IPR003256">
    <property type="entry name" value="Ribosomal_uL24"/>
</dbReference>
<dbReference type="InterPro" id="IPR005825">
    <property type="entry name" value="Ribosomal_uL24_CS"/>
</dbReference>
<dbReference type="InterPro" id="IPR041988">
    <property type="entry name" value="Ribosomal_uL24_KOW"/>
</dbReference>
<dbReference type="InterPro" id="IPR008991">
    <property type="entry name" value="Translation_prot_SH3-like_sf"/>
</dbReference>
<dbReference type="NCBIfam" id="TIGR01079">
    <property type="entry name" value="rplX_bact"/>
    <property type="match status" value="1"/>
</dbReference>
<dbReference type="PANTHER" id="PTHR12903">
    <property type="entry name" value="MITOCHONDRIAL RIBOSOMAL PROTEIN L24"/>
    <property type="match status" value="1"/>
</dbReference>
<dbReference type="Pfam" id="PF00467">
    <property type="entry name" value="KOW"/>
    <property type="match status" value="1"/>
</dbReference>
<dbReference type="Pfam" id="PF17136">
    <property type="entry name" value="ribosomal_L24"/>
    <property type="match status" value="1"/>
</dbReference>
<dbReference type="SMART" id="SM00739">
    <property type="entry name" value="KOW"/>
    <property type="match status" value="1"/>
</dbReference>
<dbReference type="SUPFAM" id="SSF50104">
    <property type="entry name" value="Translation proteins SH3-like domain"/>
    <property type="match status" value="1"/>
</dbReference>
<dbReference type="PROSITE" id="PS01108">
    <property type="entry name" value="RIBOSOMAL_L24"/>
    <property type="match status" value="1"/>
</dbReference>
<keyword id="KW-1185">Reference proteome</keyword>
<keyword id="KW-0687">Ribonucleoprotein</keyword>
<keyword id="KW-0689">Ribosomal protein</keyword>
<keyword id="KW-0694">RNA-binding</keyword>
<keyword id="KW-0699">rRNA-binding</keyword>
<gene>
    <name evidence="1" type="primary">rplX</name>
    <name type="ordered locus">Cj1696c</name>
</gene>
<evidence type="ECO:0000255" key="1">
    <source>
        <dbReference type="HAMAP-Rule" id="MF_01326"/>
    </source>
</evidence>
<evidence type="ECO:0000305" key="2"/>
<accession>Q9PLY2</accession>
<accession>Q0P7T5</accession>
<comment type="function">
    <text evidence="1">One of two assembly initiator proteins, it binds directly to the 5'-end of the 23S rRNA, where it nucleates assembly of the 50S subunit.</text>
</comment>
<comment type="function">
    <text evidence="1">One of the proteins that surrounds the polypeptide exit tunnel on the outside of the subunit.</text>
</comment>
<comment type="subunit">
    <text evidence="1">Part of the 50S ribosomal subunit.</text>
</comment>
<comment type="similarity">
    <text evidence="1">Belongs to the universal ribosomal protein uL24 family.</text>
</comment>
<reference key="1">
    <citation type="journal article" date="2000" name="Nature">
        <title>The genome sequence of the food-borne pathogen Campylobacter jejuni reveals hypervariable sequences.</title>
        <authorList>
            <person name="Parkhill J."/>
            <person name="Wren B.W."/>
            <person name="Mungall K.L."/>
            <person name="Ketley J.M."/>
            <person name="Churcher C.M."/>
            <person name="Basham D."/>
            <person name="Chillingworth T."/>
            <person name="Davies R.M."/>
            <person name="Feltwell T."/>
            <person name="Holroyd S."/>
            <person name="Jagels K."/>
            <person name="Karlyshev A.V."/>
            <person name="Moule S."/>
            <person name="Pallen M.J."/>
            <person name="Penn C.W."/>
            <person name="Quail M.A."/>
            <person name="Rajandream M.A."/>
            <person name="Rutherford K.M."/>
            <person name="van Vliet A.H.M."/>
            <person name="Whitehead S."/>
            <person name="Barrell B.G."/>
        </authorList>
    </citation>
    <scope>NUCLEOTIDE SEQUENCE [LARGE SCALE GENOMIC DNA]</scope>
    <source>
        <strain>ATCC 700819 / NCTC 11168</strain>
    </source>
</reference>
<sequence length="77" mass="8283">MAVKLKIKKGDSVKVITGDDKGKTGKVLAVYPKTLKVVVEGCKIAKKAIKPSEKNPNGGFINKEMPMDISNVAKVQE</sequence>
<protein>
    <recommendedName>
        <fullName evidence="1">Large ribosomal subunit protein uL24</fullName>
    </recommendedName>
    <alternativeName>
        <fullName evidence="2">50S ribosomal protein L24</fullName>
    </alternativeName>
</protein>
<proteinExistence type="inferred from homology"/>
<name>RL24_CAMJE</name>